<reference key="1">
    <citation type="submission" date="2007-04" db="EMBL/GenBank/DDBJ databases">
        <title>Complete sequence of Roseiflexus sp. RS-1.</title>
        <authorList>
            <consortium name="US DOE Joint Genome Institute"/>
            <person name="Copeland A."/>
            <person name="Lucas S."/>
            <person name="Lapidus A."/>
            <person name="Barry K."/>
            <person name="Detter J.C."/>
            <person name="Glavina del Rio T."/>
            <person name="Hammon N."/>
            <person name="Israni S."/>
            <person name="Dalin E."/>
            <person name="Tice H."/>
            <person name="Pitluck S."/>
            <person name="Chertkov O."/>
            <person name="Brettin T."/>
            <person name="Bruce D."/>
            <person name="Han C."/>
            <person name="Schmutz J."/>
            <person name="Larimer F."/>
            <person name="Land M."/>
            <person name="Hauser L."/>
            <person name="Kyrpides N."/>
            <person name="Mikhailova N."/>
            <person name="Bryant D.A."/>
            <person name="Richardson P."/>
        </authorList>
    </citation>
    <scope>NUCLEOTIDE SEQUENCE [LARGE SCALE GENOMIC DNA]</scope>
    <source>
        <strain>RS-1</strain>
    </source>
</reference>
<organism>
    <name type="scientific">Roseiflexus sp. (strain RS-1)</name>
    <dbReference type="NCBI Taxonomy" id="357808"/>
    <lineage>
        <taxon>Bacteria</taxon>
        <taxon>Bacillati</taxon>
        <taxon>Chloroflexota</taxon>
        <taxon>Chloroflexia</taxon>
        <taxon>Chloroflexales</taxon>
        <taxon>Roseiflexineae</taxon>
        <taxon>Roseiflexaceae</taxon>
        <taxon>Roseiflexus</taxon>
    </lineage>
</organism>
<evidence type="ECO:0000255" key="1">
    <source>
        <dbReference type="HAMAP-Rule" id="MF_00375"/>
    </source>
</evidence>
<feature type="chain" id="PRO_1000201032" description="Glutamate-1-semialdehyde 2,1-aminomutase">
    <location>
        <begin position="1"/>
        <end position="427"/>
    </location>
</feature>
<feature type="modified residue" description="N6-(pyridoxal phosphate)lysine" evidence="1">
    <location>
        <position position="267"/>
    </location>
</feature>
<name>GSA_ROSS1</name>
<dbReference type="EC" id="5.4.3.8" evidence="1"/>
<dbReference type="EMBL" id="CP000686">
    <property type="protein sequence ID" value="ABQ90143.1"/>
    <property type="molecule type" value="Genomic_DNA"/>
</dbReference>
<dbReference type="RefSeq" id="WP_011956490.1">
    <property type="nucleotide sequence ID" value="NC_009523.1"/>
</dbReference>
<dbReference type="SMR" id="A5UU40"/>
<dbReference type="STRING" id="357808.RoseRS_1753"/>
<dbReference type="KEGG" id="rrs:RoseRS_1753"/>
<dbReference type="eggNOG" id="COG0001">
    <property type="taxonomic scope" value="Bacteria"/>
</dbReference>
<dbReference type="HOGENOM" id="CLU_016922_1_5_0"/>
<dbReference type="OrthoDB" id="9807885at2"/>
<dbReference type="UniPathway" id="UPA00251">
    <property type="reaction ID" value="UER00317"/>
</dbReference>
<dbReference type="UniPathway" id="UPA00668"/>
<dbReference type="Proteomes" id="UP000006554">
    <property type="component" value="Chromosome"/>
</dbReference>
<dbReference type="GO" id="GO:0005737">
    <property type="term" value="C:cytoplasm"/>
    <property type="evidence" value="ECO:0007669"/>
    <property type="project" value="UniProtKB-SubCell"/>
</dbReference>
<dbReference type="GO" id="GO:0042286">
    <property type="term" value="F:glutamate-1-semialdehyde 2,1-aminomutase activity"/>
    <property type="evidence" value="ECO:0007669"/>
    <property type="project" value="UniProtKB-UniRule"/>
</dbReference>
<dbReference type="GO" id="GO:0030170">
    <property type="term" value="F:pyridoxal phosphate binding"/>
    <property type="evidence" value="ECO:0007669"/>
    <property type="project" value="InterPro"/>
</dbReference>
<dbReference type="GO" id="GO:0008483">
    <property type="term" value="F:transaminase activity"/>
    <property type="evidence" value="ECO:0007669"/>
    <property type="project" value="InterPro"/>
</dbReference>
<dbReference type="GO" id="GO:0015995">
    <property type="term" value="P:chlorophyll biosynthetic process"/>
    <property type="evidence" value="ECO:0007669"/>
    <property type="project" value="UniProtKB-UniRule"/>
</dbReference>
<dbReference type="GO" id="GO:0006782">
    <property type="term" value="P:protoporphyrinogen IX biosynthetic process"/>
    <property type="evidence" value="ECO:0007669"/>
    <property type="project" value="UniProtKB-UniRule"/>
</dbReference>
<dbReference type="CDD" id="cd00610">
    <property type="entry name" value="OAT_like"/>
    <property type="match status" value="1"/>
</dbReference>
<dbReference type="FunFam" id="3.40.640.10:FF:000021">
    <property type="entry name" value="Glutamate-1-semialdehyde 2,1-aminomutase"/>
    <property type="match status" value="1"/>
</dbReference>
<dbReference type="Gene3D" id="3.90.1150.10">
    <property type="entry name" value="Aspartate Aminotransferase, domain 1"/>
    <property type="match status" value="1"/>
</dbReference>
<dbReference type="Gene3D" id="3.40.640.10">
    <property type="entry name" value="Type I PLP-dependent aspartate aminotransferase-like (Major domain)"/>
    <property type="match status" value="1"/>
</dbReference>
<dbReference type="HAMAP" id="MF_00375">
    <property type="entry name" value="HemL_aminotrans_3"/>
    <property type="match status" value="1"/>
</dbReference>
<dbReference type="InterPro" id="IPR004639">
    <property type="entry name" value="4pyrrol_synth_GluAld_NH2Trfase"/>
</dbReference>
<dbReference type="InterPro" id="IPR005814">
    <property type="entry name" value="Aminotrans_3"/>
</dbReference>
<dbReference type="InterPro" id="IPR049704">
    <property type="entry name" value="Aminotrans_3_PPA_site"/>
</dbReference>
<dbReference type="InterPro" id="IPR015424">
    <property type="entry name" value="PyrdxlP-dep_Trfase"/>
</dbReference>
<dbReference type="InterPro" id="IPR015421">
    <property type="entry name" value="PyrdxlP-dep_Trfase_major"/>
</dbReference>
<dbReference type="InterPro" id="IPR015422">
    <property type="entry name" value="PyrdxlP-dep_Trfase_small"/>
</dbReference>
<dbReference type="NCBIfam" id="TIGR00713">
    <property type="entry name" value="hemL"/>
    <property type="match status" value="1"/>
</dbReference>
<dbReference type="NCBIfam" id="NF000818">
    <property type="entry name" value="PRK00062.1"/>
    <property type="match status" value="1"/>
</dbReference>
<dbReference type="PANTHER" id="PTHR43713">
    <property type="entry name" value="GLUTAMATE-1-SEMIALDEHYDE 2,1-AMINOMUTASE"/>
    <property type="match status" value="1"/>
</dbReference>
<dbReference type="PANTHER" id="PTHR43713:SF3">
    <property type="entry name" value="GLUTAMATE-1-SEMIALDEHYDE 2,1-AMINOMUTASE 1, CHLOROPLASTIC-RELATED"/>
    <property type="match status" value="1"/>
</dbReference>
<dbReference type="Pfam" id="PF00202">
    <property type="entry name" value="Aminotran_3"/>
    <property type="match status" value="1"/>
</dbReference>
<dbReference type="SUPFAM" id="SSF53383">
    <property type="entry name" value="PLP-dependent transferases"/>
    <property type="match status" value="1"/>
</dbReference>
<dbReference type="PROSITE" id="PS00600">
    <property type="entry name" value="AA_TRANSFER_CLASS_3"/>
    <property type="match status" value="1"/>
</dbReference>
<keyword id="KW-0149">Chlorophyll biosynthesis</keyword>
<keyword id="KW-0963">Cytoplasm</keyword>
<keyword id="KW-0413">Isomerase</keyword>
<keyword id="KW-0627">Porphyrin biosynthesis</keyword>
<keyword id="KW-0663">Pyridoxal phosphate</keyword>
<sequence length="427" mass="44447">MKTTRSESLFAEAQSLFPGGVNSPVRAFRAVGGTPRFIARGEGALIFDVDGNRYIDYVLSWGPLIAGHTHPDVVAAIAEQAARGTSFGAPTELESELARLIIQAMPAVEMVRFVSSGTEAAMSALRLARAATRRDKVIKFAGCYHGHFDGFLVQAGSGVATLGLPDSPGVTAATAAGTLTAPYNDLDAVEALLKANPGEVAAIAVEPVAGNMGLVLPQPGFLAGLRRLADEHGALLIFDEVMTGFRVAYGGAQGRYGITPDLTCLGKVIGGGLPAAAYGGRRELMELIAPAGPVYQAGTLSGNPLAMAAGIATLRIIGAPGVFERLEQATAALCAGFERAAADADIPLRAAYAGSMWGFFFTGDPVVDYASAKKADTRRYARFFHAMLERGVYLAPAQFEAAFVSLAHSDALIQETIAAAADALRSL</sequence>
<protein>
    <recommendedName>
        <fullName evidence="1">Glutamate-1-semialdehyde 2,1-aminomutase</fullName>
        <shortName evidence="1">GSA</shortName>
        <ecNumber evidence="1">5.4.3.8</ecNumber>
    </recommendedName>
    <alternativeName>
        <fullName evidence="1">Glutamate-1-semialdehyde aminotransferase</fullName>
        <shortName evidence="1">GSA-AT</shortName>
    </alternativeName>
</protein>
<accession>A5UU40</accession>
<comment type="catalytic activity">
    <reaction evidence="1">
        <text>(S)-4-amino-5-oxopentanoate = 5-aminolevulinate</text>
        <dbReference type="Rhea" id="RHEA:14265"/>
        <dbReference type="ChEBI" id="CHEBI:57501"/>
        <dbReference type="ChEBI" id="CHEBI:356416"/>
        <dbReference type="EC" id="5.4.3.8"/>
    </reaction>
</comment>
<comment type="cofactor">
    <cofactor evidence="1">
        <name>pyridoxal 5'-phosphate</name>
        <dbReference type="ChEBI" id="CHEBI:597326"/>
    </cofactor>
</comment>
<comment type="pathway">
    <text evidence="1">Porphyrin-containing compound metabolism; protoporphyrin-IX biosynthesis; 5-aminolevulinate from L-glutamyl-tRNA(Glu): step 2/2.</text>
</comment>
<comment type="pathway">
    <text evidence="1">Porphyrin-containing compound metabolism; chlorophyll biosynthesis.</text>
</comment>
<comment type="subunit">
    <text evidence="1">Homodimer.</text>
</comment>
<comment type="subcellular location">
    <subcellularLocation>
        <location evidence="1">Cytoplasm</location>
    </subcellularLocation>
</comment>
<comment type="similarity">
    <text evidence="1">Belongs to the class-III pyridoxal-phosphate-dependent aminotransferase family. HemL subfamily.</text>
</comment>
<proteinExistence type="inferred from homology"/>
<gene>
    <name evidence="1" type="primary">hemL</name>
    <name type="ordered locus">RoseRS_1753</name>
</gene>